<keyword id="KW-1185">Reference proteome</keyword>
<reference key="1">
    <citation type="journal article" date="1997" name="Gene">
        <title>Cloning and sequencing of a 35.7 kb in the 70 degree-73 degree region of the Bacillus subtilis genome reveal genes for a new two-component system, three spore germination proteins, an iron uptake system and a general stress response protein.</title>
        <authorList>
            <person name="Yamamoto H."/>
            <person name="Uchiyama S."/>
            <person name="Nugroho F.A."/>
            <person name="Sekiguchi J."/>
        </authorList>
    </citation>
    <scope>NUCLEOTIDE SEQUENCE [GENOMIC DNA]</scope>
    <source>
        <strain>168 / AC327</strain>
    </source>
</reference>
<reference key="2">
    <citation type="journal article" date="1997" name="Nature">
        <title>The complete genome sequence of the Gram-positive bacterium Bacillus subtilis.</title>
        <authorList>
            <person name="Kunst F."/>
            <person name="Ogasawara N."/>
            <person name="Moszer I."/>
            <person name="Albertini A.M."/>
            <person name="Alloni G."/>
            <person name="Azevedo V."/>
            <person name="Bertero M.G."/>
            <person name="Bessieres P."/>
            <person name="Bolotin A."/>
            <person name="Borchert S."/>
            <person name="Borriss R."/>
            <person name="Boursier L."/>
            <person name="Brans A."/>
            <person name="Braun M."/>
            <person name="Brignell S.C."/>
            <person name="Bron S."/>
            <person name="Brouillet S."/>
            <person name="Bruschi C.V."/>
            <person name="Caldwell B."/>
            <person name="Capuano V."/>
            <person name="Carter N.M."/>
            <person name="Choi S.-K."/>
            <person name="Codani J.-J."/>
            <person name="Connerton I.F."/>
            <person name="Cummings N.J."/>
            <person name="Daniel R.A."/>
            <person name="Denizot F."/>
            <person name="Devine K.M."/>
            <person name="Duesterhoeft A."/>
            <person name="Ehrlich S.D."/>
            <person name="Emmerson P.T."/>
            <person name="Entian K.-D."/>
            <person name="Errington J."/>
            <person name="Fabret C."/>
            <person name="Ferrari E."/>
            <person name="Foulger D."/>
            <person name="Fritz C."/>
            <person name="Fujita M."/>
            <person name="Fujita Y."/>
            <person name="Fuma S."/>
            <person name="Galizzi A."/>
            <person name="Galleron N."/>
            <person name="Ghim S.-Y."/>
            <person name="Glaser P."/>
            <person name="Goffeau A."/>
            <person name="Golightly E.J."/>
            <person name="Grandi G."/>
            <person name="Guiseppi G."/>
            <person name="Guy B.J."/>
            <person name="Haga K."/>
            <person name="Haiech J."/>
            <person name="Harwood C.R."/>
            <person name="Henaut A."/>
            <person name="Hilbert H."/>
            <person name="Holsappel S."/>
            <person name="Hosono S."/>
            <person name="Hullo M.-F."/>
            <person name="Itaya M."/>
            <person name="Jones L.-M."/>
            <person name="Joris B."/>
            <person name="Karamata D."/>
            <person name="Kasahara Y."/>
            <person name="Klaerr-Blanchard M."/>
            <person name="Klein C."/>
            <person name="Kobayashi Y."/>
            <person name="Koetter P."/>
            <person name="Koningstein G."/>
            <person name="Krogh S."/>
            <person name="Kumano M."/>
            <person name="Kurita K."/>
            <person name="Lapidus A."/>
            <person name="Lardinois S."/>
            <person name="Lauber J."/>
            <person name="Lazarevic V."/>
            <person name="Lee S.-M."/>
            <person name="Levine A."/>
            <person name="Liu H."/>
            <person name="Masuda S."/>
            <person name="Mauel C."/>
            <person name="Medigue C."/>
            <person name="Medina N."/>
            <person name="Mellado R.P."/>
            <person name="Mizuno M."/>
            <person name="Moestl D."/>
            <person name="Nakai S."/>
            <person name="Noback M."/>
            <person name="Noone D."/>
            <person name="O'Reilly M."/>
            <person name="Ogawa K."/>
            <person name="Ogiwara A."/>
            <person name="Oudega B."/>
            <person name="Park S.-H."/>
            <person name="Parro V."/>
            <person name="Pohl T.M."/>
            <person name="Portetelle D."/>
            <person name="Porwollik S."/>
            <person name="Prescott A.M."/>
            <person name="Presecan E."/>
            <person name="Pujic P."/>
            <person name="Purnelle B."/>
            <person name="Rapoport G."/>
            <person name="Rey M."/>
            <person name="Reynolds S."/>
            <person name="Rieger M."/>
            <person name="Rivolta C."/>
            <person name="Rocha E."/>
            <person name="Roche B."/>
            <person name="Rose M."/>
            <person name="Sadaie Y."/>
            <person name="Sato T."/>
            <person name="Scanlan E."/>
            <person name="Schleich S."/>
            <person name="Schroeter R."/>
            <person name="Scoffone F."/>
            <person name="Sekiguchi J."/>
            <person name="Sekowska A."/>
            <person name="Seror S.J."/>
            <person name="Serror P."/>
            <person name="Shin B.-S."/>
            <person name="Soldo B."/>
            <person name="Sorokin A."/>
            <person name="Tacconi E."/>
            <person name="Takagi T."/>
            <person name="Takahashi H."/>
            <person name="Takemaru K."/>
            <person name="Takeuchi M."/>
            <person name="Tamakoshi A."/>
            <person name="Tanaka T."/>
            <person name="Terpstra P."/>
            <person name="Tognoni A."/>
            <person name="Tosato V."/>
            <person name="Uchiyama S."/>
            <person name="Vandenbol M."/>
            <person name="Vannier F."/>
            <person name="Vassarotti A."/>
            <person name="Viari A."/>
            <person name="Wambutt R."/>
            <person name="Wedler E."/>
            <person name="Wedler H."/>
            <person name="Weitzenegger T."/>
            <person name="Winters P."/>
            <person name="Wipat A."/>
            <person name="Yamamoto H."/>
            <person name="Yamane K."/>
            <person name="Yasumoto K."/>
            <person name="Yata K."/>
            <person name="Yoshida K."/>
            <person name="Yoshikawa H.-F."/>
            <person name="Zumstein E."/>
            <person name="Yoshikawa H."/>
            <person name="Danchin A."/>
        </authorList>
    </citation>
    <scope>NUCLEOTIDE SEQUENCE [LARGE SCALE GENOMIC DNA]</scope>
    <source>
        <strain>168</strain>
    </source>
</reference>
<protein>
    <recommendedName>
        <fullName>Uncharacterized protein YflJ</fullName>
    </recommendedName>
</protein>
<accession>O34345</accession>
<dbReference type="EMBL" id="D86417">
    <property type="protein sequence ID" value="BAA22303.1"/>
    <property type="molecule type" value="Genomic_DNA"/>
</dbReference>
<dbReference type="EMBL" id="AL009126">
    <property type="protein sequence ID" value="CAB12595.1"/>
    <property type="molecule type" value="Genomic_DNA"/>
</dbReference>
<dbReference type="PIR" id="H69810">
    <property type="entry name" value="H69810"/>
</dbReference>
<dbReference type="RefSeq" id="NP_388647.1">
    <property type="nucleotide sequence ID" value="NC_000964.3"/>
</dbReference>
<dbReference type="RefSeq" id="WP_003233704.1">
    <property type="nucleotide sequence ID" value="NZ_OZ025638.1"/>
</dbReference>
<dbReference type="FunCoup" id="O34345">
    <property type="interactions" value="10"/>
</dbReference>
<dbReference type="PaxDb" id="224308-BSU07660"/>
<dbReference type="EnsemblBacteria" id="CAB12595">
    <property type="protein sequence ID" value="CAB12595"/>
    <property type="gene ID" value="BSU_07660"/>
</dbReference>
<dbReference type="GeneID" id="939685"/>
<dbReference type="KEGG" id="bsu:BSU07660"/>
<dbReference type="PATRIC" id="fig|224308.179.peg.832"/>
<dbReference type="eggNOG" id="ENOG50339Y6">
    <property type="taxonomic scope" value="Bacteria"/>
</dbReference>
<dbReference type="InParanoid" id="O34345"/>
<dbReference type="OrthoDB" id="2738543at2"/>
<dbReference type="BioCyc" id="BSUB:BSU07660-MONOMER"/>
<dbReference type="Proteomes" id="UP000001570">
    <property type="component" value="Chromosome"/>
</dbReference>
<dbReference type="InterPro" id="IPR022580">
    <property type="entry name" value="DUF2639"/>
</dbReference>
<dbReference type="Pfam" id="PF11121">
    <property type="entry name" value="DUF2639"/>
    <property type="match status" value="1"/>
</dbReference>
<feature type="chain" id="PRO_0000049535" description="Uncharacterized protein YflJ">
    <location>
        <begin position="1"/>
        <end position="45"/>
    </location>
</feature>
<gene>
    <name type="primary">yflJ</name>
    <name type="ordered locus">BSU07660</name>
</gene>
<name>YFLJ_BACSU</name>
<sequence length="45" mass="5313">MHYGSKGWYVAELKKQGITHHEGRKLQSYKTYFLANLLESKKKQS</sequence>
<organism>
    <name type="scientific">Bacillus subtilis (strain 168)</name>
    <dbReference type="NCBI Taxonomy" id="224308"/>
    <lineage>
        <taxon>Bacteria</taxon>
        <taxon>Bacillati</taxon>
        <taxon>Bacillota</taxon>
        <taxon>Bacilli</taxon>
        <taxon>Bacillales</taxon>
        <taxon>Bacillaceae</taxon>
        <taxon>Bacillus</taxon>
    </lineage>
</organism>
<proteinExistence type="predicted"/>